<comment type="function">
    <text evidence="3">Transcription activator which may regulates gene expression through interaction with the histone deacetylase HDA19.</text>
</comment>
<comment type="subunit">
    <text evidence="3">Interacts with HDA19; Ser-188 is critical for this interaction.</text>
</comment>
<comment type="subcellular location">
    <subcellularLocation>
        <location evidence="3">Nucleus</location>
    </subcellularLocation>
</comment>
<comment type="tissue specificity">
    <text evidence="3">Strongly expressed in stems, flowers, roots and immature siliques, but not detected in leaf blades of seedlings.</text>
</comment>
<comment type="induction">
    <text evidence="3">Accumulates in leaf blades but fades out from stems in response to cold stress (PubMed:12631331). Rapid but transient induction in leaf blades in response to inomycin, an ionophore of Ca(2+), suggesting a transient Ca(2+) influx (PubMed:12631331).</text>
</comment>
<comment type="domain">
    <text evidence="3">The Kinase-inducible domain (KID, 177-204) is required for interaction with HDA19.</text>
</comment>
<keyword id="KW-0010">Activator</keyword>
<keyword id="KW-0539">Nucleus</keyword>
<keyword id="KW-0597">Phosphoprotein</keyword>
<keyword id="KW-0346">Stress response</keyword>
<keyword id="KW-0804">Transcription</keyword>
<keyword id="KW-0805">Transcription regulation</keyword>
<organism>
    <name type="scientific">Brassica napus</name>
    <name type="common">Rape</name>
    <dbReference type="NCBI Taxonomy" id="3708"/>
    <lineage>
        <taxon>Eukaryota</taxon>
        <taxon>Viridiplantae</taxon>
        <taxon>Streptophyta</taxon>
        <taxon>Embryophyta</taxon>
        <taxon>Tracheophyta</taxon>
        <taxon>Spermatophyta</taxon>
        <taxon>Magnoliopsida</taxon>
        <taxon>eudicotyledons</taxon>
        <taxon>Gunneridae</taxon>
        <taxon>Pentapetalae</taxon>
        <taxon>rosids</taxon>
        <taxon>malvids</taxon>
        <taxon>Brassicales</taxon>
        <taxon>Brassicaceae</taxon>
        <taxon>Brassiceae</taxon>
        <taxon>Brassica</taxon>
    </lineage>
</organism>
<evidence type="ECO:0000255" key="1"/>
<evidence type="ECO:0000256" key="2">
    <source>
        <dbReference type="SAM" id="MobiDB-lite"/>
    </source>
</evidence>
<evidence type="ECO:0000269" key="3">
    <source>
    </source>
</evidence>
<evidence type="ECO:0000303" key="4">
    <source>
    </source>
</evidence>
<evidence type="ECO:0000312" key="5">
    <source>
        <dbReference type="EMBL" id="CAF2144644.1"/>
    </source>
</evidence>
<proteinExistence type="evidence at protein level"/>
<gene>
    <name evidence="4" type="primary">KCP1</name>
    <name evidence="5" type="ORF">DARMORV10_A02P40050.1</name>
</gene>
<dbReference type="EMBL" id="AY211985">
    <property type="protein sequence ID" value="AAO53442.1"/>
    <property type="molecule type" value="mRNA"/>
</dbReference>
<dbReference type="EMBL" id="HG994356">
    <property type="protein sequence ID" value="CAF2144644.1"/>
    <property type="molecule type" value="Genomic_DNA"/>
</dbReference>
<dbReference type="RefSeq" id="NP_001302889.1">
    <property type="nucleotide sequence ID" value="NM_001315960.1"/>
</dbReference>
<dbReference type="iPTMnet" id="Q84U09"/>
<dbReference type="EnsemblPlants" id="CDY05462">
    <property type="protein sequence ID" value="CDY05462"/>
    <property type="gene ID" value="GSBRNA2T00120377001"/>
</dbReference>
<dbReference type="GeneID" id="106404212"/>
<dbReference type="Gramene" id="CDY05462">
    <property type="protein sequence ID" value="CDY05462"/>
    <property type="gene ID" value="GSBRNA2T00120377001"/>
</dbReference>
<dbReference type="KEGG" id="bna:106404212"/>
<dbReference type="OMA" id="LMASKWS"/>
<dbReference type="OrthoDB" id="696276at2759"/>
<dbReference type="Proteomes" id="UP001295469">
    <property type="component" value="Chromosome A02"/>
</dbReference>
<dbReference type="GO" id="GO:0005634">
    <property type="term" value="C:nucleus"/>
    <property type="evidence" value="ECO:0000314"/>
    <property type="project" value="UniProtKB"/>
</dbReference>
<dbReference type="GO" id="GO:0045893">
    <property type="term" value="P:positive regulation of DNA-templated transcription"/>
    <property type="evidence" value="ECO:0000314"/>
    <property type="project" value="UniProtKB"/>
</dbReference>
<dbReference type="GO" id="GO:0009409">
    <property type="term" value="P:response to cold"/>
    <property type="evidence" value="ECO:0000270"/>
    <property type="project" value="UniProtKB"/>
</dbReference>
<dbReference type="InterPro" id="IPR051992">
    <property type="entry name" value="OxStress_Response_Reg"/>
</dbReference>
<dbReference type="PANTHER" id="PTHR33172:SF51">
    <property type="entry name" value="(RAPE) HYPOTHETICAL PROTEIN"/>
    <property type="match status" value="1"/>
</dbReference>
<dbReference type="PANTHER" id="PTHR33172">
    <property type="entry name" value="OS08G0516900 PROTEIN"/>
    <property type="match status" value="1"/>
</dbReference>
<name>KCP1_BRANA</name>
<sequence>MAGGGPTFSIELSAYGSDLPTDKASGDIPNEEGSGLSRVGSGIWSGRTVDYSSESSSSIGTPGDSEEEDEESEEDNDEEELGLASLRSLEDSLPSKGLSSHYKGKSKSFGNLGEIGSVKEVPKQENPLNKKRRLQIYNKLARKSFYSWQNPKSMPLLPVHEDNDDEEGDDGDLSDEERGGDVLARRPSFKNRALKSMSCFALSDLQEEEEEEEDE</sequence>
<protein>
    <recommendedName>
        <fullName evidence="4">KID-containing protein 1</fullName>
        <shortName evidence="4">BnKCP1</shortName>
    </recommendedName>
</protein>
<accession>Q84U09</accession>
<reference key="1">
    <citation type="journal article" date="2003" name="Plant J.">
        <title>A novel protein from Brassica napus has a putative KID domain and responds to low temperature.</title>
        <authorList>
            <person name="Gao M.-J."/>
            <person name="Schaefer U.A."/>
            <person name="Parkin I.A.P."/>
            <person name="Hegedus D.D."/>
            <person name="Lydiate D.J."/>
            <person name="Hannoufa A."/>
        </authorList>
    </citation>
    <scope>NUCLEOTIDE SEQUENCE [MRNA]</scope>
    <scope>FUNCTION</scope>
    <scope>MUTAGENESIS OF SER-188</scope>
    <scope>INTERACTION WITH HDA19</scope>
    <scope>SUBCELLULAR LOCATION</scope>
    <scope>TISSUE SPECIFICITY</scope>
    <scope>INDUCTION BY COLD</scope>
    <scope>PHOSPHORYLATION AT SER-188</scope>
    <scope>DOMAIN</scope>
</reference>
<reference key="2">
    <citation type="submission" date="2021-01" db="EMBL/GenBank/DDBJ databases">
        <authorList>
            <consortium name="Genoscope - CEA"/>
            <person name="William W."/>
        </authorList>
    </citation>
    <scope>NUCLEOTIDE SEQUENCE [LARGE SCALE GENOMIC DNA]</scope>
</reference>
<feature type="chain" id="PRO_0000455038" description="KID-containing protein 1">
    <location>
        <begin position="1"/>
        <end position="215"/>
    </location>
</feature>
<feature type="region of interest" description="Disordered" evidence="2">
    <location>
        <begin position="1"/>
        <end position="132"/>
    </location>
</feature>
<feature type="region of interest" description="Disordered" evidence="2">
    <location>
        <begin position="150"/>
        <end position="183"/>
    </location>
</feature>
<feature type="region of interest" description="Kinase-inducible domain (KID)" evidence="4">
    <location>
        <begin position="177"/>
        <end position="204"/>
    </location>
</feature>
<feature type="short sequence motif" description="Nuclear localization signal" evidence="1">
    <location>
        <begin position="129"/>
        <end position="137"/>
    </location>
</feature>
<feature type="compositionally biased region" description="Acidic residues" evidence="2">
    <location>
        <begin position="64"/>
        <end position="81"/>
    </location>
</feature>
<feature type="compositionally biased region" description="Acidic residues" evidence="2">
    <location>
        <begin position="162"/>
        <end position="175"/>
    </location>
</feature>
<feature type="site" description="Critical for interaction with HDA19" evidence="3">
    <location>
        <position position="188"/>
    </location>
</feature>
<feature type="modified residue" description="Phosphoserine; by PKA" evidence="3">
    <location>
        <position position="188"/>
    </location>
</feature>
<feature type="mutagenesis site" description="Impaired interaction with HDA19." evidence="3">
    <original>S</original>
    <variation>G</variation>
    <location>
        <position position="188"/>
    </location>
</feature>